<dbReference type="EMBL" id="BX571662">
    <property type="protein sequence ID" value="CAE11018.1"/>
    <property type="molecule type" value="Genomic_DNA"/>
</dbReference>
<dbReference type="RefSeq" id="WP_011139800.1">
    <property type="nucleotide sequence ID" value="NC_005090.1"/>
</dbReference>
<dbReference type="SMR" id="Q7M7X5"/>
<dbReference type="STRING" id="273121.WS2016"/>
<dbReference type="KEGG" id="wsu:WS2016"/>
<dbReference type="eggNOG" id="COG0532">
    <property type="taxonomic scope" value="Bacteria"/>
</dbReference>
<dbReference type="eggNOG" id="COG0810">
    <property type="taxonomic scope" value="Bacteria"/>
</dbReference>
<dbReference type="HOGENOM" id="CLU_006301_4_1_7"/>
<dbReference type="Proteomes" id="UP000000422">
    <property type="component" value="Chromosome"/>
</dbReference>
<dbReference type="GO" id="GO:0005829">
    <property type="term" value="C:cytosol"/>
    <property type="evidence" value="ECO:0007669"/>
    <property type="project" value="TreeGrafter"/>
</dbReference>
<dbReference type="GO" id="GO:0005525">
    <property type="term" value="F:GTP binding"/>
    <property type="evidence" value="ECO:0007669"/>
    <property type="project" value="UniProtKB-KW"/>
</dbReference>
<dbReference type="GO" id="GO:0003924">
    <property type="term" value="F:GTPase activity"/>
    <property type="evidence" value="ECO:0007669"/>
    <property type="project" value="UniProtKB-UniRule"/>
</dbReference>
<dbReference type="GO" id="GO:0003743">
    <property type="term" value="F:translation initiation factor activity"/>
    <property type="evidence" value="ECO:0007669"/>
    <property type="project" value="UniProtKB-UniRule"/>
</dbReference>
<dbReference type="CDD" id="cd01887">
    <property type="entry name" value="IF2_eIF5B"/>
    <property type="match status" value="1"/>
</dbReference>
<dbReference type="CDD" id="cd03702">
    <property type="entry name" value="IF2_mtIF2_II"/>
    <property type="match status" value="1"/>
</dbReference>
<dbReference type="CDD" id="cd03692">
    <property type="entry name" value="mtIF2_IVc"/>
    <property type="match status" value="1"/>
</dbReference>
<dbReference type="FunFam" id="2.40.30.10:FF:000008">
    <property type="entry name" value="Translation initiation factor IF-2"/>
    <property type="match status" value="1"/>
</dbReference>
<dbReference type="FunFam" id="2.40.30.10:FF:000054">
    <property type="entry name" value="Translation initiation factor IF-2"/>
    <property type="match status" value="1"/>
</dbReference>
<dbReference type="FunFam" id="3.40.50.10050:FF:000001">
    <property type="entry name" value="Translation initiation factor IF-2"/>
    <property type="match status" value="1"/>
</dbReference>
<dbReference type="FunFam" id="3.40.50.300:FF:000019">
    <property type="entry name" value="Translation initiation factor IF-2"/>
    <property type="match status" value="1"/>
</dbReference>
<dbReference type="Gene3D" id="1.10.10.2480">
    <property type="match status" value="1"/>
</dbReference>
<dbReference type="Gene3D" id="3.40.50.300">
    <property type="entry name" value="P-loop containing nucleotide triphosphate hydrolases"/>
    <property type="match status" value="1"/>
</dbReference>
<dbReference type="Gene3D" id="2.40.30.10">
    <property type="entry name" value="Translation factors"/>
    <property type="match status" value="2"/>
</dbReference>
<dbReference type="Gene3D" id="3.40.50.10050">
    <property type="entry name" value="Translation initiation factor IF- 2, domain 3"/>
    <property type="match status" value="1"/>
</dbReference>
<dbReference type="HAMAP" id="MF_00100_B">
    <property type="entry name" value="IF_2_B"/>
    <property type="match status" value="1"/>
</dbReference>
<dbReference type="InterPro" id="IPR053905">
    <property type="entry name" value="EF-G-like_DII"/>
</dbReference>
<dbReference type="InterPro" id="IPR004161">
    <property type="entry name" value="EFTu-like_2"/>
</dbReference>
<dbReference type="InterPro" id="IPR044145">
    <property type="entry name" value="IF2_II"/>
</dbReference>
<dbReference type="InterPro" id="IPR006847">
    <property type="entry name" value="IF2_N"/>
</dbReference>
<dbReference type="InterPro" id="IPR027417">
    <property type="entry name" value="P-loop_NTPase"/>
</dbReference>
<dbReference type="InterPro" id="IPR005225">
    <property type="entry name" value="Small_GTP-bd"/>
</dbReference>
<dbReference type="InterPro" id="IPR000795">
    <property type="entry name" value="T_Tr_GTP-bd_dom"/>
</dbReference>
<dbReference type="InterPro" id="IPR000178">
    <property type="entry name" value="TF_IF2_bacterial-like"/>
</dbReference>
<dbReference type="InterPro" id="IPR015760">
    <property type="entry name" value="TIF_IF2"/>
</dbReference>
<dbReference type="InterPro" id="IPR023115">
    <property type="entry name" value="TIF_IF2_dom3"/>
</dbReference>
<dbReference type="InterPro" id="IPR036925">
    <property type="entry name" value="TIF_IF2_dom3_sf"/>
</dbReference>
<dbReference type="InterPro" id="IPR009000">
    <property type="entry name" value="Transl_B-barrel_sf"/>
</dbReference>
<dbReference type="NCBIfam" id="TIGR00487">
    <property type="entry name" value="IF-2"/>
    <property type="match status" value="1"/>
</dbReference>
<dbReference type="NCBIfam" id="TIGR00231">
    <property type="entry name" value="small_GTP"/>
    <property type="match status" value="1"/>
</dbReference>
<dbReference type="PANTHER" id="PTHR43381:SF5">
    <property type="entry name" value="TR-TYPE G DOMAIN-CONTAINING PROTEIN"/>
    <property type="match status" value="1"/>
</dbReference>
<dbReference type="PANTHER" id="PTHR43381">
    <property type="entry name" value="TRANSLATION INITIATION FACTOR IF-2-RELATED"/>
    <property type="match status" value="1"/>
</dbReference>
<dbReference type="Pfam" id="PF22042">
    <property type="entry name" value="EF-G_D2"/>
    <property type="match status" value="1"/>
</dbReference>
<dbReference type="Pfam" id="PF00009">
    <property type="entry name" value="GTP_EFTU"/>
    <property type="match status" value="1"/>
</dbReference>
<dbReference type="Pfam" id="PF03144">
    <property type="entry name" value="GTP_EFTU_D2"/>
    <property type="match status" value="1"/>
</dbReference>
<dbReference type="Pfam" id="PF11987">
    <property type="entry name" value="IF-2"/>
    <property type="match status" value="1"/>
</dbReference>
<dbReference type="Pfam" id="PF04760">
    <property type="entry name" value="IF2_N"/>
    <property type="match status" value="2"/>
</dbReference>
<dbReference type="PRINTS" id="PR00449">
    <property type="entry name" value="RASTRNSFRMNG"/>
</dbReference>
<dbReference type="SUPFAM" id="SSF52156">
    <property type="entry name" value="Initiation factor IF2/eIF5b, domain 3"/>
    <property type="match status" value="1"/>
</dbReference>
<dbReference type="SUPFAM" id="SSF52540">
    <property type="entry name" value="P-loop containing nucleoside triphosphate hydrolases"/>
    <property type="match status" value="1"/>
</dbReference>
<dbReference type="SUPFAM" id="SSF50447">
    <property type="entry name" value="Translation proteins"/>
    <property type="match status" value="2"/>
</dbReference>
<dbReference type="PROSITE" id="PS51722">
    <property type="entry name" value="G_TR_2"/>
    <property type="match status" value="1"/>
</dbReference>
<dbReference type="PROSITE" id="PS01176">
    <property type="entry name" value="IF2"/>
    <property type="match status" value="1"/>
</dbReference>
<evidence type="ECO:0000250" key="1"/>
<evidence type="ECO:0000255" key="2">
    <source>
        <dbReference type="HAMAP-Rule" id="MF_00100"/>
    </source>
</evidence>
<evidence type="ECO:0000256" key="3">
    <source>
        <dbReference type="SAM" id="MobiDB-lite"/>
    </source>
</evidence>
<gene>
    <name evidence="2" type="primary">infB</name>
    <name type="ordered locus">WS2016</name>
</gene>
<protein>
    <recommendedName>
        <fullName evidence="2">Translation initiation factor IF-2</fullName>
    </recommendedName>
</protein>
<name>IF2_WOLSU</name>
<reference key="1">
    <citation type="journal article" date="2003" name="Proc. Natl. Acad. Sci. U.S.A.">
        <title>Complete genome sequence and analysis of Wolinella succinogenes.</title>
        <authorList>
            <person name="Baar C."/>
            <person name="Eppinger M."/>
            <person name="Raddatz G."/>
            <person name="Simon J."/>
            <person name="Lanz C."/>
            <person name="Klimmek O."/>
            <person name="Nandakumar R."/>
            <person name="Gross R."/>
            <person name="Rosinus A."/>
            <person name="Keller H."/>
            <person name="Jagtap P."/>
            <person name="Linke B."/>
            <person name="Meyer F."/>
            <person name="Lederer H."/>
            <person name="Schuster S.C."/>
        </authorList>
    </citation>
    <scope>NUCLEOTIDE SEQUENCE [LARGE SCALE GENOMIC DNA]</scope>
    <source>
        <strain>ATCC 29543 / DSM 1740 / CCUG 13145 / JCM 31913 / LMG 7466 / NCTC 11488 / FDC 602W</strain>
    </source>
</reference>
<feature type="chain" id="PRO_0000137284" description="Translation initiation factor IF-2">
    <location>
        <begin position="1"/>
        <end position="939"/>
    </location>
</feature>
<feature type="domain" description="tr-type G">
    <location>
        <begin position="438"/>
        <end position="607"/>
    </location>
</feature>
<feature type="region of interest" description="Disordered" evidence="3">
    <location>
        <begin position="57"/>
        <end position="274"/>
    </location>
</feature>
<feature type="region of interest" description="G1" evidence="1">
    <location>
        <begin position="447"/>
        <end position="454"/>
    </location>
</feature>
<feature type="region of interest" description="G2" evidence="1">
    <location>
        <begin position="472"/>
        <end position="476"/>
    </location>
</feature>
<feature type="region of interest" description="G3" evidence="1">
    <location>
        <begin position="493"/>
        <end position="496"/>
    </location>
</feature>
<feature type="region of interest" description="G4" evidence="1">
    <location>
        <begin position="547"/>
        <end position="550"/>
    </location>
</feature>
<feature type="region of interest" description="G5" evidence="1">
    <location>
        <begin position="583"/>
        <end position="585"/>
    </location>
</feature>
<feature type="compositionally biased region" description="Basic and acidic residues" evidence="3">
    <location>
        <begin position="83"/>
        <end position="122"/>
    </location>
</feature>
<feature type="compositionally biased region" description="Basic and acidic residues" evidence="3">
    <location>
        <begin position="129"/>
        <end position="138"/>
    </location>
</feature>
<feature type="compositionally biased region" description="Polar residues" evidence="3">
    <location>
        <begin position="146"/>
        <end position="158"/>
    </location>
</feature>
<feature type="compositionally biased region" description="Polar residues" evidence="3">
    <location>
        <begin position="170"/>
        <end position="180"/>
    </location>
</feature>
<feature type="compositionally biased region" description="Basic and acidic residues" evidence="3">
    <location>
        <begin position="208"/>
        <end position="227"/>
    </location>
</feature>
<feature type="compositionally biased region" description="Basic residues" evidence="3">
    <location>
        <begin position="252"/>
        <end position="262"/>
    </location>
</feature>
<feature type="binding site" evidence="2">
    <location>
        <begin position="447"/>
        <end position="454"/>
    </location>
    <ligand>
        <name>GTP</name>
        <dbReference type="ChEBI" id="CHEBI:37565"/>
    </ligand>
</feature>
<feature type="binding site" evidence="2">
    <location>
        <begin position="493"/>
        <end position="497"/>
    </location>
    <ligand>
        <name>GTP</name>
        <dbReference type="ChEBI" id="CHEBI:37565"/>
    </ligand>
</feature>
<feature type="binding site" evidence="2">
    <location>
        <begin position="547"/>
        <end position="550"/>
    </location>
    <ligand>
        <name>GTP</name>
        <dbReference type="ChEBI" id="CHEBI:37565"/>
    </ligand>
</feature>
<organism>
    <name type="scientific">Wolinella succinogenes (strain ATCC 29543 / DSM 1740 / CCUG 13145 / JCM 31913 / LMG 7466 / NCTC 11488 / FDC 602W)</name>
    <name type="common">Vibrio succinogenes</name>
    <dbReference type="NCBI Taxonomy" id="273121"/>
    <lineage>
        <taxon>Bacteria</taxon>
        <taxon>Pseudomonadati</taxon>
        <taxon>Campylobacterota</taxon>
        <taxon>Epsilonproteobacteria</taxon>
        <taxon>Campylobacterales</taxon>
        <taxon>Helicobacteraceae</taxon>
        <taxon>Wolinella</taxon>
    </lineage>
</organism>
<proteinExistence type="inferred from homology"/>
<keyword id="KW-0963">Cytoplasm</keyword>
<keyword id="KW-0342">GTP-binding</keyword>
<keyword id="KW-0396">Initiation factor</keyword>
<keyword id="KW-0547">Nucleotide-binding</keyword>
<keyword id="KW-0648">Protein biosynthesis</keyword>
<keyword id="KW-1185">Reference proteome</keyword>
<sequence>MQKVRVHEIALELGIKSKEIIDKAKDLDLDLKTASSALPQEEAAELVNYILTGKSSRLKPAAPAAPMPKEEEISPAPQEESQMEPKEEPQKEVKESVKEAPESLPESPKEEAFEAEIPKESVKVTPKTLEQEPPKEELVSIEPSLESASETLSDSNPLPQEKTETKETIVATTLATQTDAEIQESEEKKETLAQATVQKRVGLRIVKKRSEEPAPKADRPSLEEARTPSRTAGLKTLQSLLGESDESEAALARKKKKEKKKPLPAPTKKNEQKIDLLGDRALETVSSFDDEQEEIVLFDLTIRDDINKEDEVAKKVDTDRIKVQRKTPFLDQGIRRVKRRKRRPQTVADKESISGTIEIPEEIRAYEFAEKTGKSIGEVIKVLFNLGLMITKNDFLDRDSIEILAEELELDVVIKNTSEALEYTSEEEEDEDEEGLEERPPVVTIMGHVDHGKTSLLDKIRNTKVAAGEAGGITQHIGAYTVEKDGKKISFIDTPGHEAFTEMRARGAEVTDIVIIVIAADDGVKQQTIEALNHAKAANVPIIIALNKVDKPDANPDKVKAEAADLGYSPLEWGGEYEFVHISAKTGEGIDHLLETILVQSELLELKANPEKAAKAVVIESSLEKGKGPVATVIVQSGTLKVGDSIVADTAYGRVRALIDDCGKNIQSIGPSEVAVVTGLSETPMAGAVLVSVENDSIAREYAEKRALYLRQKELSRSTKVSFDELSAMVAEGQLKSLPVIIKADTQGSLEAIRGSLEKLRNEEVKINIIHAGVGGITESDVVLAGASDNSVILGFNVRPTGSVKNRAKELGVEVKTYSIIYALLDDVRAVLGGMMSPVLEEENTGQAEVRETFTIAKVGTIAGCLVTDGSIQRGIKVRLIRNGVVVFTGNIASLKRFKDDAREVSKGYECGIMLEGFNDVQVGDVFETYKEVEKARKL</sequence>
<accession>Q7M7X5</accession>
<comment type="function">
    <text evidence="2">One of the essential components for the initiation of protein synthesis. Protects formylmethionyl-tRNA from spontaneous hydrolysis and promotes its binding to the 30S ribosomal subunits. Also involved in the hydrolysis of GTP during the formation of the 70S ribosomal complex.</text>
</comment>
<comment type="subcellular location">
    <subcellularLocation>
        <location evidence="2">Cytoplasm</location>
    </subcellularLocation>
</comment>
<comment type="similarity">
    <text evidence="2">Belongs to the TRAFAC class translation factor GTPase superfamily. Classic translation factor GTPase family. IF-2 subfamily.</text>
</comment>